<proteinExistence type="inferred from homology"/>
<name>PPIL2_EMENI</name>
<protein>
    <recommendedName>
        <fullName evidence="6">Peptidyl-prolyl cis-trans isomerase-like 2</fullName>
        <shortName>PPIase</shortName>
        <ecNumber evidence="3">2.3.2.27</ecNumber>
        <ecNumber evidence="1">5.2.1.8</ecNumber>
    </recommendedName>
    <alternativeName>
        <fullName>Cyclophilin-60</fullName>
    </alternativeName>
    <alternativeName>
        <fullName>Cyclophilin-like protein Cyp-60</fullName>
    </alternativeName>
    <alternativeName>
        <fullName evidence="6">RING-type E3 ubiquitin transferase isomerase-like 2</fullName>
    </alternativeName>
    <alternativeName>
        <fullName>Rotamase</fullName>
    </alternativeName>
</protein>
<reference key="1">
    <citation type="journal article" date="2005" name="Nature">
        <title>Sequencing of Aspergillus nidulans and comparative analysis with A. fumigatus and A. oryzae.</title>
        <authorList>
            <person name="Galagan J.E."/>
            <person name="Calvo S.E."/>
            <person name="Cuomo C."/>
            <person name="Ma L.-J."/>
            <person name="Wortman J.R."/>
            <person name="Batzoglou S."/>
            <person name="Lee S.-I."/>
            <person name="Bastuerkmen M."/>
            <person name="Spevak C.C."/>
            <person name="Clutterbuck J."/>
            <person name="Kapitonov V."/>
            <person name="Jurka J."/>
            <person name="Scazzocchio C."/>
            <person name="Farman M.L."/>
            <person name="Butler J."/>
            <person name="Purcell S."/>
            <person name="Harris S."/>
            <person name="Braus G.H."/>
            <person name="Draht O."/>
            <person name="Busch S."/>
            <person name="D'Enfert C."/>
            <person name="Bouchier C."/>
            <person name="Goldman G.H."/>
            <person name="Bell-Pedersen D."/>
            <person name="Griffiths-Jones S."/>
            <person name="Doonan J.H."/>
            <person name="Yu J."/>
            <person name="Vienken K."/>
            <person name="Pain A."/>
            <person name="Freitag M."/>
            <person name="Selker E.U."/>
            <person name="Archer D.B."/>
            <person name="Penalva M.A."/>
            <person name="Oakley B.R."/>
            <person name="Momany M."/>
            <person name="Tanaka T."/>
            <person name="Kumagai T."/>
            <person name="Asai K."/>
            <person name="Machida M."/>
            <person name="Nierman W.C."/>
            <person name="Denning D.W."/>
            <person name="Caddick M.X."/>
            <person name="Hynes M."/>
            <person name="Paoletti M."/>
            <person name="Fischer R."/>
            <person name="Miller B.L."/>
            <person name="Dyer P.S."/>
            <person name="Sachs M.S."/>
            <person name="Osmani S.A."/>
            <person name="Birren B.W."/>
        </authorList>
    </citation>
    <scope>NUCLEOTIDE SEQUENCE [LARGE SCALE GENOMIC DNA]</scope>
    <source>
        <strain>FGSC A4 / ATCC 38163 / CBS 112.46 / NRRL 194 / M139</strain>
    </source>
</reference>
<reference key="2">
    <citation type="journal article" date="2009" name="Fungal Genet. Biol.">
        <title>The 2008 update of the Aspergillus nidulans genome annotation: a community effort.</title>
        <authorList>
            <person name="Wortman J.R."/>
            <person name="Gilsenan J.M."/>
            <person name="Joardar V."/>
            <person name="Deegan J."/>
            <person name="Clutterbuck J."/>
            <person name="Andersen M.R."/>
            <person name="Archer D."/>
            <person name="Bencina M."/>
            <person name="Braus G."/>
            <person name="Coutinho P."/>
            <person name="von Dohren H."/>
            <person name="Doonan J."/>
            <person name="Driessen A.J."/>
            <person name="Durek P."/>
            <person name="Espeso E."/>
            <person name="Fekete E."/>
            <person name="Flipphi M."/>
            <person name="Estrada C.G."/>
            <person name="Geysens S."/>
            <person name="Goldman G."/>
            <person name="de Groot P.W."/>
            <person name="Hansen K."/>
            <person name="Harris S.D."/>
            <person name="Heinekamp T."/>
            <person name="Helmstaedt K."/>
            <person name="Henrissat B."/>
            <person name="Hofmann G."/>
            <person name="Homan T."/>
            <person name="Horio T."/>
            <person name="Horiuchi H."/>
            <person name="James S."/>
            <person name="Jones M."/>
            <person name="Karaffa L."/>
            <person name="Karanyi Z."/>
            <person name="Kato M."/>
            <person name="Keller N."/>
            <person name="Kelly D.E."/>
            <person name="Kiel J.A."/>
            <person name="Kim J.M."/>
            <person name="van der Klei I.J."/>
            <person name="Klis F.M."/>
            <person name="Kovalchuk A."/>
            <person name="Krasevec N."/>
            <person name="Kubicek C.P."/>
            <person name="Liu B."/>
            <person name="Maccabe A."/>
            <person name="Meyer V."/>
            <person name="Mirabito P."/>
            <person name="Miskei M."/>
            <person name="Mos M."/>
            <person name="Mullins J."/>
            <person name="Nelson D.R."/>
            <person name="Nielsen J."/>
            <person name="Oakley B.R."/>
            <person name="Osmani S.A."/>
            <person name="Pakula T."/>
            <person name="Paszewski A."/>
            <person name="Paulsen I."/>
            <person name="Pilsyk S."/>
            <person name="Pocsi I."/>
            <person name="Punt P.J."/>
            <person name="Ram A.F."/>
            <person name="Ren Q."/>
            <person name="Robellet X."/>
            <person name="Robson G."/>
            <person name="Seiboth B."/>
            <person name="van Solingen P."/>
            <person name="Specht T."/>
            <person name="Sun J."/>
            <person name="Taheri-Talesh N."/>
            <person name="Takeshita N."/>
            <person name="Ussery D."/>
            <person name="vanKuyk P.A."/>
            <person name="Visser H."/>
            <person name="van de Vondervoort P.J."/>
            <person name="de Vries R.P."/>
            <person name="Walton J."/>
            <person name="Xiang X."/>
            <person name="Xiong Y."/>
            <person name="Zeng A.P."/>
            <person name="Brandt B.W."/>
            <person name="Cornell M.J."/>
            <person name="van den Hondel C.A."/>
            <person name="Visser J."/>
            <person name="Oliver S.G."/>
            <person name="Turner G."/>
        </authorList>
    </citation>
    <scope>GENOME REANNOTATION</scope>
    <source>
        <strain>FGSC A4 / ATCC 38163 / CBS 112.46 / NRRL 194 / M139</strain>
    </source>
</reference>
<keyword id="KW-0413">Isomerase</keyword>
<keyword id="KW-0539">Nucleus</keyword>
<keyword id="KW-1185">Reference proteome</keyword>
<keyword id="KW-0697">Rotamase</keyword>
<keyword id="KW-0808">Transferase</keyword>
<keyword id="KW-0833">Ubl conjugation pathway</keyword>
<evidence type="ECO:0000250" key="1">
    <source>
        <dbReference type="UniProtKB" id="Q08752"/>
    </source>
</evidence>
<evidence type="ECO:0000250" key="2">
    <source>
        <dbReference type="UniProtKB" id="Q09928"/>
    </source>
</evidence>
<evidence type="ECO:0000250" key="3">
    <source>
        <dbReference type="UniProtKB" id="Q13356"/>
    </source>
</evidence>
<evidence type="ECO:0000255" key="4">
    <source>
        <dbReference type="PROSITE-ProRule" id="PRU00156"/>
    </source>
</evidence>
<evidence type="ECO:0000256" key="5">
    <source>
        <dbReference type="SAM" id="MobiDB-lite"/>
    </source>
</evidence>
<evidence type="ECO:0000305" key="6"/>
<gene>
    <name type="primary">cyp8</name>
    <name type="ORF">AN6894</name>
</gene>
<dbReference type="EC" id="2.3.2.27" evidence="3"/>
<dbReference type="EC" id="5.2.1.8" evidence="1"/>
<dbReference type="EMBL" id="AACD01000113">
    <property type="protein sequence ID" value="EAA58293.1"/>
    <property type="molecule type" value="Genomic_DNA"/>
</dbReference>
<dbReference type="EMBL" id="BN001301">
    <property type="protein sequence ID" value="CBF71677.1"/>
    <property type="molecule type" value="Genomic_DNA"/>
</dbReference>
<dbReference type="RefSeq" id="XP_664498.1">
    <property type="nucleotide sequence ID" value="XM_659406.1"/>
</dbReference>
<dbReference type="SMR" id="Q5AXT6"/>
<dbReference type="STRING" id="227321.Q5AXT6"/>
<dbReference type="EnsemblFungi" id="CBF71677">
    <property type="protein sequence ID" value="CBF71677"/>
    <property type="gene ID" value="ANIA_06894"/>
</dbReference>
<dbReference type="KEGG" id="ani:ANIA_06894"/>
<dbReference type="VEuPathDB" id="FungiDB:AN6894"/>
<dbReference type="eggNOG" id="KOG0883">
    <property type="taxonomic scope" value="Eukaryota"/>
</dbReference>
<dbReference type="HOGENOM" id="CLU_012062_7_0_1"/>
<dbReference type="InParanoid" id="Q5AXT6"/>
<dbReference type="OMA" id="NFIKHCA"/>
<dbReference type="OrthoDB" id="407558at2759"/>
<dbReference type="UniPathway" id="UPA00143"/>
<dbReference type="Proteomes" id="UP000000560">
    <property type="component" value="Chromosome I"/>
</dbReference>
<dbReference type="GO" id="GO:0071013">
    <property type="term" value="C:catalytic step 2 spliceosome"/>
    <property type="evidence" value="ECO:0000318"/>
    <property type="project" value="GO_Central"/>
</dbReference>
<dbReference type="GO" id="GO:0003755">
    <property type="term" value="F:peptidyl-prolyl cis-trans isomerase activity"/>
    <property type="evidence" value="ECO:0007669"/>
    <property type="project" value="UniProtKB-KW"/>
</dbReference>
<dbReference type="GO" id="GO:0061630">
    <property type="term" value="F:ubiquitin protein ligase activity"/>
    <property type="evidence" value="ECO:0000318"/>
    <property type="project" value="GO_Central"/>
</dbReference>
<dbReference type="GO" id="GO:0006457">
    <property type="term" value="P:protein folding"/>
    <property type="evidence" value="ECO:0000318"/>
    <property type="project" value="GO_Central"/>
</dbReference>
<dbReference type="GO" id="GO:0016567">
    <property type="term" value="P:protein ubiquitination"/>
    <property type="evidence" value="ECO:0007669"/>
    <property type="project" value="UniProtKB-UniPathway"/>
</dbReference>
<dbReference type="CDD" id="cd01923">
    <property type="entry name" value="cyclophilin_RING"/>
    <property type="match status" value="1"/>
</dbReference>
<dbReference type="CDD" id="cd16663">
    <property type="entry name" value="RING-Ubox_PPIL2"/>
    <property type="match status" value="1"/>
</dbReference>
<dbReference type="FunFam" id="3.30.40.10:FF:000079">
    <property type="entry name" value="Peptidyl-prolyl cis-trans isomerase 2"/>
    <property type="match status" value="1"/>
</dbReference>
<dbReference type="FunFam" id="2.40.100.10:FF:000014">
    <property type="entry name" value="Peptidyl-prolyl cis-trans isomerase cyp65"/>
    <property type="match status" value="1"/>
</dbReference>
<dbReference type="Gene3D" id="2.40.100.10">
    <property type="entry name" value="Cyclophilin-like"/>
    <property type="match status" value="1"/>
</dbReference>
<dbReference type="Gene3D" id="3.30.40.10">
    <property type="entry name" value="Zinc/RING finger domain, C3HC4 (zinc finger)"/>
    <property type="match status" value="1"/>
</dbReference>
<dbReference type="InterPro" id="IPR029000">
    <property type="entry name" value="Cyclophilin-like_dom_sf"/>
</dbReference>
<dbReference type="InterPro" id="IPR020892">
    <property type="entry name" value="Cyclophilin-type_PPIase_CS"/>
</dbReference>
<dbReference type="InterPro" id="IPR002130">
    <property type="entry name" value="Cyclophilin-type_PPIase_dom"/>
</dbReference>
<dbReference type="InterPro" id="IPR044666">
    <property type="entry name" value="Cyclophilin_A-like"/>
</dbReference>
<dbReference type="InterPro" id="IPR026951">
    <property type="entry name" value="PPIL2_U-box_dom"/>
</dbReference>
<dbReference type="InterPro" id="IPR003613">
    <property type="entry name" value="Ubox_domain"/>
</dbReference>
<dbReference type="InterPro" id="IPR013083">
    <property type="entry name" value="Znf_RING/FYVE/PHD"/>
</dbReference>
<dbReference type="PANTHER" id="PTHR45625">
    <property type="entry name" value="PEPTIDYL-PROLYL CIS-TRANS ISOMERASE-RELATED"/>
    <property type="match status" value="1"/>
</dbReference>
<dbReference type="PANTHER" id="PTHR45625:SF1">
    <property type="entry name" value="RING-TYPE E3 UBIQUITIN-PROTEIN LIGASE PPIL2"/>
    <property type="match status" value="1"/>
</dbReference>
<dbReference type="Pfam" id="PF00160">
    <property type="entry name" value="Pro_isomerase"/>
    <property type="match status" value="1"/>
</dbReference>
<dbReference type="PRINTS" id="PR00153">
    <property type="entry name" value="CSAPPISMRASE"/>
</dbReference>
<dbReference type="SMART" id="SM00504">
    <property type="entry name" value="Ubox"/>
    <property type="match status" value="1"/>
</dbReference>
<dbReference type="SUPFAM" id="SSF50891">
    <property type="entry name" value="Cyclophilin-like"/>
    <property type="match status" value="1"/>
</dbReference>
<dbReference type="SUPFAM" id="SSF57850">
    <property type="entry name" value="RING/U-box"/>
    <property type="match status" value="1"/>
</dbReference>
<dbReference type="PROSITE" id="PS00170">
    <property type="entry name" value="CSA_PPIASE_1"/>
    <property type="match status" value="1"/>
</dbReference>
<dbReference type="PROSITE" id="PS50072">
    <property type="entry name" value="CSA_PPIASE_2"/>
    <property type="match status" value="1"/>
</dbReference>
<dbReference type="PROSITE" id="PS51698">
    <property type="entry name" value="U_BOX"/>
    <property type="match status" value="1"/>
</dbReference>
<feature type="chain" id="PRO_0000232985" description="Peptidyl-prolyl cis-trans isomerase-like 2">
    <location>
        <begin position="1"/>
        <end position="580"/>
    </location>
</feature>
<feature type="domain" description="U-box">
    <location>
        <begin position="42"/>
        <end position="115"/>
    </location>
</feature>
<feature type="domain" description="PPIase cyclophilin-type" evidence="4">
    <location>
        <begin position="309"/>
        <end position="468"/>
    </location>
</feature>
<feature type="region of interest" description="Disordered" evidence="5">
    <location>
        <begin position="182"/>
        <end position="201"/>
    </location>
</feature>
<feature type="region of interest" description="Disordered" evidence="5">
    <location>
        <begin position="227"/>
        <end position="259"/>
    </location>
</feature>
<feature type="region of interest" description="Disordered" evidence="5">
    <location>
        <begin position="439"/>
        <end position="459"/>
    </location>
</feature>
<feature type="region of interest" description="Disordered" evidence="5">
    <location>
        <begin position="479"/>
        <end position="530"/>
    </location>
</feature>
<feature type="region of interest" description="Disordered" evidence="5">
    <location>
        <begin position="553"/>
        <end position="580"/>
    </location>
</feature>
<feature type="compositionally biased region" description="Polar residues" evidence="5">
    <location>
        <begin position="439"/>
        <end position="457"/>
    </location>
</feature>
<feature type="compositionally biased region" description="Basic and acidic residues" evidence="5">
    <location>
        <begin position="490"/>
        <end position="507"/>
    </location>
</feature>
<organism>
    <name type="scientific">Emericella nidulans (strain FGSC A4 / ATCC 38163 / CBS 112.46 / NRRL 194 / M139)</name>
    <name type="common">Aspergillus nidulans</name>
    <dbReference type="NCBI Taxonomy" id="227321"/>
    <lineage>
        <taxon>Eukaryota</taxon>
        <taxon>Fungi</taxon>
        <taxon>Dikarya</taxon>
        <taxon>Ascomycota</taxon>
        <taxon>Pezizomycotina</taxon>
        <taxon>Eurotiomycetes</taxon>
        <taxon>Eurotiomycetidae</taxon>
        <taxon>Eurotiales</taxon>
        <taxon>Aspergillaceae</taxon>
        <taxon>Aspergillus</taxon>
        <taxon>Aspergillus subgen. Nidulantes</taxon>
    </lineage>
</organism>
<sequence length="580" mass="64101">MGKGTDKLYITHSEWASEDAYSASAGAGVGKARRGVGEASFKRLPFRFCSLSLQPFEHPVCTQSGTIFDLTSILPWIKKHGTNPVDGTPLKGSDLIKLTIAKNDAGEYIDPVTYKVLTDNTHVVALRNTGNVFAWDTIERLNIKGKMWRDLVSDEEFTRKDIITLQDPQNIESRDLSRFNHIKEGESGLSDEQLREREDPSRNVNVNALGSSAKILKAREAVAKARQERAQKAGNAASTPVAKTDAPVKSAQKTASYQSGKPVPYNAARYTTGLAAASFTSTGMTPHTSAELALLSDEDYMLKRGRVKQKGYARISTTSGDINLELHTEYAPKAVWNFIKLAKKGYYKDVTFHRNIKGFMIQGGDPTGTGRGGESIWGKYFNDEFEGPLKHDSRGTLSMANKGKNTNSSQFFIAYRALPHLNLKHTIFGHVIDDPTPSSPTLNKLETHPVNPTTNRPTPDIRIVDVTIFVDPFEEFLKQKKQSEQSAENEANRTAENDEEGSRRAEDDQITWTGKRVRGPGASKEESSTTVGKYLKAALSERAAHDEDEIVEFVDEEPTSEPAKKKFKGIGGFGDFSSWD</sequence>
<accession>Q5AXT6</accession>
<accession>C8V2X0</accession>
<comment type="function">
    <text evidence="1 3">May catalyze the cis-trans isomerization of proline imidic peptide bonds in oligopeptides thereby assisting the folding of proteins. May also function as a chaperone, playing a role in intracellular transport of proteins. May also have a protein ubiquitin ligase activity acting as an E3 ubiquitin protein ligase or as a ubiquitin-ubiquitin ligase promoting elongation of ubiquitin chains on proteins.</text>
</comment>
<comment type="catalytic activity">
    <reaction>
        <text>[protein]-peptidylproline (omega=180) = [protein]-peptidylproline (omega=0)</text>
        <dbReference type="Rhea" id="RHEA:16237"/>
        <dbReference type="Rhea" id="RHEA-COMP:10747"/>
        <dbReference type="Rhea" id="RHEA-COMP:10748"/>
        <dbReference type="ChEBI" id="CHEBI:83833"/>
        <dbReference type="ChEBI" id="CHEBI:83834"/>
        <dbReference type="EC" id="5.2.1.8"/>
    </reaction>
</comment>
<comment type="catalytic activity">
    <reaction evidence="3">
        <text>S-ubiquitinyl-[E2 ubiquitin-conjugating enzyme]-L-cysteine + [acceptor protein]-L-lysine = [E2 ubiquitin-conjugating enzyme]-L-cysteine + N(6)-ubiquitinyl-[acceptor protein]-L-lysine.</text>
        <dbReference type="EC" id="2.3.2.27"/>
    </reaction>
</comment>
<comment type="pathway">
    <text evidence="3">Protein modification; protein ubiquitination.</text>
</comment>
<comment type="subcellular location">
    <subcellularLocation>
        <location evidence="2 3">Nucleus</location>
    </subcellularLocation>
</comment>
<comment type="similarity">
    <text evidence="6">Belongs to the cyclophilin-type PPIase family. PPIL2 subfamily.</text>
</comment>